<feature type="chain" id="PRO_0000122679" description="Protein RecA">
    <location>
        <begin position="1"/>
        <end position="344"/>
    </location>
</feature>
<feature type="binding site" evidence="1">
    <location>
        <begin position="65"/>
        <end position="72"/>
    </location>
    <ligand>
        <name>ATP</name>
        <dbReference type="ChEBI" id="CHEBI:30616"/>
    </ligand>
</feature>
<feature type="sequence variant" description="In strain: NCTC 12894.">
    <original>K</original>
    <variation>R</variation>
    <location>
        <position position="101"/>
    </location>
</feature>
<feature type="sequence variant" description="In strain: NCTC 12894.">
    <original>D</original>
    <variation>N</variation>
    <location>
        <position position="105"/>
    </location>
</feature>
<feature type="sequence variant" description="In strain: NCTC 12894.">
    <original>E</original>
    <variation>K</variation>
    <location>
        <position position="176"/>
    </location>
</feature>
<feature type="sequence variant" description="In strain: NCTC 12894.">
    <original>S</original>
    <variation>A</variation>
    <location>
        <position position="219"/>
    </location>
</feature>
<feature type="sequence variant" description="In strain: NCTC 12894.">
    <original>GD</original>
    <variation>EGE</variation>
    <location>
        <begin position="342"/>
        <end position="343"/>
    </location>
</feature>
<organism>
    <name type="scientific">Campylobacter lari</name>
    <dbReference type="NCBI Taxonomy" id="201"/>
    <lineage>
        <taxon>Bacteria</taxon>
        <taxon>Pseudomonadati</taxon>
        <taxon>Campylobacterota</taxon>
        <taxon>Epsilonproteobacteria</taxon>
        <taxon>Campylobacterales</taxon>
        <taxon>Campylobacteraceae</taxon>
        <taxon>Campylobacter</taxon>
    </lineage>
</organism>
<comment type="function">
    <text evidence="1">Can catalyze the hydrolysis of ATP in the presence of single-stranded DNA, the ATP-dependent uptake of single-stranded DNA by duplex DNA, and the ATP-dependent hybridization of homologous single-stranded DNAs. It interacts with LexA causing its activation and leading to its autocatalytic cleavage.</text>
</comment>
<comment type="subcellular location">
    <subcellularLocation>
        <location evidence="1">Cytoplasm</location>
    </subcellularLocation>
</comment>
<comment type="similarity">
    <text evidence="1">Belongs to the RecA family.</text>
</comment>
<gene>
    <name evidence="1" type="primary">recA</name>
</gene>
<name>RECA_CAMLA</name>
<sequence>MDDNKRKSLDAALKSLDKTFGKGTILRLGDKEVEKIDSIPTGSVGLDLALGIGGVPKGRIIEIYGPESSGKTTLTLHIIAECQKKGGVCAFIDAEHALDVKYAKDLGVDTENLYISQPDFGEQALEIVETIARSGAIDLIVVDSVAALTPKAEIEGDMGDQHVGLQARLMSQALRELTGIVHKMNTTVIFINQIRMKIGMMGYGTPETTTGGNALKFYSSVRLDVRKTATLKQNDEPIGNRVKVKVAKNKVAPPFKQAEFDVMFGEGVSREGELIDYGVKLDIIDKSGAWFSYKASKLGQGRENAKAFLKENPAIADEITQAIQNSIGIDSMILGAKEDDEGDE</sequence>
<protein>
    <recommendedName>
        <fullName evidence="1">Protein RecA</fullName>
    </recommendedName>
    <alternativeName>
        <fullName evidence="1">Recombinase A</fullName>
    </alternativeName>
</protein>
<dbReference type="EMBL" id="AB067767">
    <property type="protein sequence ID" value="BAB62716.1"/>
    <property type="molecule type" value="Genomic_DNA"/>
</dbReference>
<dbReference type="EMBL" id="AB067768">
    <property type="protein sequence ID" value="BAB62717.1"/>
    <property type="molecule type" value="Genomic_DNA"/>
</dbReference>
<dbReference type="RefSeq" id="WP_039617275.1">
    <property type="nucleotide sequence ID" value="NZ_UFVM01000002.1"/>
</dbReference>
<dbReference type="SMR" id="Q93R37"/>
<dbReference type="GeneID" id="93004242"/>
<dbReference type="GO" id="GO:0005829">
    <property type="term" value="C:cytosol"/>
    <property type="evidence" value="ECO:0007669"/>
    <property type="project" value="TreeGrafter"/>
</dbReference>
<dbReference type="GO" id="GO:0005524">
    <property type="term" value="F:ATP binding"/>
    <property type="evidence" value="ECO:0007669"/>
    <property type="project" value="UniProtKB-UniRule"/>
</dbReference>
<dbReference type="GO" id="GO:0016887">
    <property type="term" value="F:ATP hydrolysis activity"/>
    <property type="evidence" value="ECO:0007669"/>
    <property type="project" value="InterPro"/>
</dbReference>
<dbReference type="GO" id="GO:0140664">
    <property type="term" value="F:ATP-dependent DNA damage sensor activity"/>
    <property type="evidence" value="ECO:0007669"/>
    <property type="project" value="InterPro"/>
</dbReference>
<dbReference type="GO" id="GO:0003684">
    <property type="term" value="F:damaged DNA binding"/>
    <property type="evidence" value="ECO:0007669"/>
    <property type="project" value="UniProtKB-UniRule"/>
</dbReference>
<dbReference type="GO" id="GO:0003697">
    <property type="term" value="F:single-stranded DNA binding"/>
    <property type="evidence" value="ECO:0007669"/>
    <property type="project" value="UniProtKB-UniRule"/>
</dbReference>
<dbReference type="GO" id="GO:0006310">
    <property type="term" value="P:DNA recombination"/>
    <property type="evidence" value="ECO:0007669"/>
    <property type="project" value="UniProtKB-UniRule"/>
</dbReference>
<dbReference type="GO" id="GO:0006281">
    <property type="term" value="P:DNA repair"/>
    <property type="evidence" value="ECO:0007669"/>
    <property type="project" value="UniProtKB-UniRule"/>
</dbReference>
<dbReference type="GO" id="GO:0009432">
    <property type="term" value="P:SOS response"/>
    <property type="evidence" value="ECO:0007669"/>
    <property type="project" value="UniProtKB-UniRule"/>
</dbReference>
<dbReference type="CDD" id="cd00983">
    <property type="entry name" value="RecA"/>
    <property type="match status" value="1"/>
</dbReference>
<dbReference type="FunFam" id="3.40.50.300:FF:000087">
    <property type="entry name" value="Recombinase RecA"/>
    <property type="match status" value="1"/>
</dbReference>
<dbReference type="Gene3D" id="3.40.50.300">
    <property type="entry name" value="P-loop containing nucleotide triphosphate hydrolases"/>
    <property type="match status" value="1"/>
</dbReference>
<dbReference type="HAMAP" id="MF_00268">
    <property type="entry name" value="RecA"/>
    <property type="match status" value="1"/>
</dbReference>
<dbReference type="InterPro" id="IPR003593">
    <property type="entry name" value="AAA+_ATPase"/>
</dbReference>
<dbReference type="InterPro" id="IPR013765">
    <property type="entry name" value="DNA_recomb/repair_RecA"/>
</dbReference>
<dbReference type="InterPro" id="IPR020584">
    <property type="entry name" value="DNA_recomb/repair_RecA_CS"/>
</dbReference>
<dbReference type="InterPro" id="IPR027417">
    <property type="entry name" value="P-loop_NTPase"/>
</dbReference>
<dbReference type="InterPro" id="IPR049261">
    <property type="entry name" value="RecA-like_C"/>
</dbReference>
<dbReference type="InterPro" id="IPR049428">
    <property type="entry name" value="RecA-like_N"/>
</dbReference>
<dbReference type="InterPro" id="IPR020588">
    <property type="entry name" value="RecA_ATP-bd"/>
</dbReference>
<dbReference type="InterPro" id="IPR023400">
    <property type="entry name" value="RecA_C_sf"/>
</dbReference>
<dbReference type="InterPro" id="IPR020587">
    <property type="entry name" value="RecA_monomer-monomer_interface"/>
</dbReference>
<dbReference type="NCBIfam" id="TIGR02012">
    <property type="entry name" value="tigrfam_recA"/>
    <property type="match status" value="1"/>
</dbReference>
<dbReference type="PANTHER" id="PTHR45900:SF1">
    <property type="entry name" value="MITOCHONDRIAL DNA REPAIR PROTEIN RECA HOMOLOG-RELATED"/>
    <property type="match status" value="1"/>
</dbReference>
<dbReference type="PANTHER" id="PTHR45900">
    <property type="entry name" value="RECA"/>
    <property type="match status" value="1"/>
</dbReference>
<dbReference type="Pfam" id="PF00154">
    <property type="entry name" value="RecA"/>
    <property type="match status" value="1"/>
</dbReference>
<dbReference type="Pfam" id="PF21096">
    <property type="entry name" value="RecA_C"/>
    <property type="match status" value="1"/>
</dbReference>
<dbReference type="PRINTS" id="PR00142">
    <property type="entry name" value="RECA"/>
</dbReference>
<dbReference type="SMART" id="SM00382">
    <property type="entry name" value="AAA"/>
    <property type="match status" value="1"/>
</dbReference>
<dbReference type="SUPFAM" id="SSF52540">
    <property type="entry name" value="P-loop containing nucleoside triphosphate hydrolases"/>
    <property type="match status" value="1"/>
</dbReference>
<dbReference type="SUPFAM" id="SSF54752">
    <property type="entry name" value="RecA protein, C-terminal domain"/>
    <property type="match status" value="1"/>
</dbReference>
<dbReference type="PROSITE" id="PS00321">
    <property type="entry name" value="RECA_1"/>
    <property type="match status" value="1"/>
</dbReference>
<dbReference type="PROSITE" id="PS50162">
    <property type="entry name" value="RECA_2"/>
    <property type="match status" value="1"/>
</dbReference>
<dbReference type="PROSITE" id="PS50163">
    <property type="entry name" value="RECA_3"/>
    <property type="match status" value="1"/>
</dbReference>
<accession>Q93R37</accession>
<accession>Q93R36</accession>
<reference key="1">
    <citation type="submission" date="2001-08" db="EMBL/GenBank/DDBJ databases">
        <title>Cloning and sequence analysis of the recA gene of Campylobacter lari JCM2530.</title>
        <authorList>
            <person name="Honda M."/>
            <person name="Matsushita S."/>
            <person name="Murayama O."/>
            <person name="Millar B.C."/>
            <person name="Moore J.E."/>
            <person name="Matsuda M."/>
        </authorList>
    </citation>
    <scope>NUCLEOTIDE SEQUENCE [GENOMIC DNA]</scope>
    <source>
        <strain>ATCC 35221 / DSM 11375 / JCM 2530 / LMG 8846 / NCTC 11352</strain>
    </source>
</reference>
<reference key="2">
    <citation type="submission" date="2001-08" db="EMBL/GenBank/DDBJ databases">
        <title>Cloning and sequence analysis of the recA gene of urease-positive thermophilic Campylobacter.</title>
        <authorList>
            <person name="Matsuda M."/>
            <person name="Honda M."/>
            <person name="Matsushita S."/>
            <person name="Matsui T."/>
            <person name="Murayama O."/>
            <person name="Millar B.C."/>
            <person name="Moore J.E."/>
        </authorList>
    </citation>
    <scope>NUCLEOTIDE SEQUENCE [GENOMIC DNA]</scope>
    <source>
        <strain>NCTC 12894 / A692/85</strain>
    </source>
</reference>
<evidence type="ECO:0000255" key="1">
    <source>
        <dbReference type="HAMAP-Rule" id="MF_00268"/>
    </source>
</evidence>
<proteinExistence type="inferred from homology"/>
<keyword id="KW-0067">ATP-binding</keyword>
<keyword id="KW-0963">Cytoplasm</keyword>
<keyword id="KW-0227">DNA damage</keyword>
<keyword id="KW-0233">DNA recombination</keyword>
<keyword id="KW-0234">DNA repair</keyword>
<keyword id="KW-0238">DNA-binding</keyword>
<keyword id="KW-0547">Nucleotide-binding</keyword>
<keyword id="KW-0742">SOS response</keyword>